<accession>B7NT65</accession>
<dbReference type="EMBL" id="CU928164">
    <property type="protein sequence ID" value="CAR17476.1"/>
    <property type="molecule type" value="Genomic_DNA"/>
</dbReference>
<dbReference type="RefSeq" id="WP_000956528.1">
    <property type="nucleotide sequence ID" value="NC_011750.1"/>
</dbReference>
<dbReference type="RefSeq" id="YP_002407350.1">
    <property type="nucleotide sequence ID" value="NC_011750.1"/>
</dbReference>
<dbReference type="SMR" id="B7NT65"/>
<dbReference type="STRING" id="585057.ECIAI39_1342"/>
<dbReference type="KEGG" id="ect:ECIAI39_1342"/>
<dbReference type="PATRIC" id="fig|585057.6.peg.1404"/>
<dbReference type="HOGENOM" id="CLU_013016_0_3_6"/>
<dbReference type="Proteomes" id="UP000000749">
    <property type="component" value="Chromosome"/>
</dbReference>
<dbReference type="GO" id="GO:0005886">
    <property type="term" value="C:plasma membrane"/>
    <property type="evidence" value="ECO:0007669"/>
    <property type="project" value="UniProtKB-SubCell"/>
</dbReference>
<dbReference type="GO" id="GO:0090482">
    <property type="term" value="F:vitamin transmembrane transporter activity"/>
    <property type="evidence" value="ECO:0007669"/>
    <property type="project" value="UniProtKB-UniRule"/>
</dbReference>
<dbReference type="GO" id="GO:0015889">
    <property type="term" value="P:cobalamin transport"/>
    <property type="evidence" value="ECO:0007669"/>
    <property type="project" value="UniProtKB-UniRule"/>
</dbReference>
<dbReference type="CDD" id="cd06550">
    <property type="entry name" value="TM_ABC_iron-siderophores_like"/>
    <property type="match status" value="1"/>
</dbReference>
<dbReference type="FunFam" id="1.10.3470.10:FF:000001">
    <property type="entry name" value="Vitamin B12 ABC transporter permease BtuC"/>
    <property type="match status" value="1"/>
</dbReference>
<dbReference type="Gene3D" id="1.10.3470.10">
    <property type="entry name" value="ABC transporter involved in vitamin B12 uptake, BtuC"/>
    <property type="match status" value="1"/>
</dbReference>
<dbReference type="HAMAP" id="MF_01004">
    <property type="entry name" value="BtuC"/>
    <property type="match status" value="1"/>
</dbReference>
<dbReference type="InterPro" id="IPR037294">
    <property type="entry name" value="ABC_BtuC-like"/>
</dbReference>
<dbReference type="InterPro" id="IPR023691">
    <property type="entry name" value="ABC_transptr_BtuC"/>
</dbReference>
<dbReference type="InterPro" id="IPR000522">
    <property type="entry name" value="ABC_transptr_permease_BtuC"/>
</dbReference>
<dbReference type="NCBIfam" id="NF003001">
    <property type="entry name" value="PRK03784.1"/>
    <property type="match status" value="1"/>
</dbReference>
<dbReference type="PANTHER" id="PTHR30472">
    <property type="entry name" value="FERRIC ENTEROBACTIN TRANSPORT SYSTEM PERMEASE PROTEIN"/>
    <property type="match status" value="1"/>
</dbReference>
<dbReference type="PANTHER" id="PTHR30472:SF29">
    <property type="entry name" value="VITAMIN B12 IMPORT SYSTEM PERMEASE PROTEIN BTUC"/>
    <property type="match status" value="1"/>
</dbReference>
<dbReference type="Pfam" id="PF01032">
    <property type="entry name" value="FecCD"/>
    <property type="match status" value="1"/>
</dbReference>
<dbReference type="SUPFAM" id="SSF81345">
    <property type="entry name" value="ABC transporter involved in vitamin B12 uptake, BtuC"/>
    <property type="match status" value="1"/>
</dbReference>
<organism>
    <name type="scientific">Escherichia coli O7:K1 (strain IAI39 / ExPEC)</name>
    <dbReference type="NCBI Taxonomy" id="585057"/>
    <lineage>
        <taxon>Bacteria</taxon>
        <taxon>Pseudomonadati</taxon>
        <taxon>Pseudomonadota</taxon>
        <taxon>Gammaproteobacteria</taxon>
        <taxon>Enterobacterales</taxon>
        <taxon>Enterobacteriaceae</taxon>
        <taxon>Escherichia</taxon>
    </lineage>
</organism>
<proteinExistence type="inferred from homology"/>
<sequence>MLTLARQQQRQNIRWLLCLSVLMLLALLLSLCAGEQWISPGDWFTPRGELFVWQIRLPRTLAVLLVGAALAISGAVMQALFENPLAEPGLLGVSNGAGVGLIAAVLLGQGQLPNWALGLCAIAGALIITLILLRFARRHLSTSRLLLAGVALGIICSALMTWAIYFSTSVDLRQLMYWMMGGFGGVDWRQSWLMLALIPVLLWICCQSRPMNMLALGEISARQLGLPLWFWRNVLVAATGWMVGVSVALAGAIGFIGLVIPHILRLCGLTDHRVLLPGCALAGASALLLADIVARLALAAAELPIGVVTATLGAPVFIWLLLKAGR</sequence>
<reference key="1">
    <citation type="journal article" date="2009" name="PLoS Genet.">
        <title>Organised genome dynamics in the Escherichia coli species results in highly diverse adaptive paths.</title>
        <authorList>
            <person name="Touchon M."/>
            <person name="Hoede C."/>
            <person name="Tenaillon O."/>
            <person name="Barbe V."/>
            <person name="Baeriswyl S."/>
            <person name="Bidet P."/>
            <person name="Bingen E."/>
            <person name="Bonacorsi S."/>
            <person name="Bouchier C."/>
            <person name="Bouvet O."/>
            <person name="Calteau A."/>
            <person name="Chiapello H."/>
            <person name="Clermont O."/>
            <person name="Cruveiller S."/>
            <person name="Danchin A."/>
            <person name="Diard M."/>
            <person name="Dossat C."/>
            <person name="Karoui M.E."/>
            <person name="Frapy E."/>
            <person name="Garry L."/>
            <person name="Ghigo J.M."/>
            <person name="Gilles A.M."/>
            <person name="Johnson J."/>
            <person name="Le Bouguenec C."/>
            <person name="Lescat M."/>
            <person name="Mangenot S."/>
            <person name="Martinez-Jehanne V."/>
            <person name="Matic I."/>
            <person name="Nassif X."/>
            <person name="Oztas S."/>
            <person name="Petit M.A."/>
            <person name="Pichon C."/>
            <person name="Rouy Z."/>
            <person name="Ruf C.S."/>
            <person name="Schneider D."/>
            <person name="Tourret J."/>
            <person name="Vacherie B."/>
            <person name="Vallenet D."/>
            <person name="Medigue C."/>
            <person name="Rocha E.P.C."/>
            <person name="Denamur E."/>
        </authorList>
    </citation>
    <scope>NUCLEOTIDE SEQUENCE [LARGE SCALE GENOMIC DNA]</scope>
    <source>
        <strain>IAI39 / ExPEC</strain>
    </source>
</reference>
<gene>
    <name evidence="1" type="primary">btuC</name>
    <name type="ordered locus">ECIAI39_1342</name>
</gene>
<comment type="function">
    <text evidence="1">Part of the ABC transporter complex BtuCDF involved in vitamin B12 import. Involved in the translocation of the substrate across the membrane.</text>
</comment>
<comment type="subunit">
    <text evidence="1">The complex is composed of two ATP-binding proteins (BtuD), two transmembrane proteins (BtuC) and a solute-binding protein (BtuF).</text>
</comment>
<comment type="subcellular location">
    <subcellularLocation>
        <location evidence="1">Cell inner membrane</location>
        <topology evidence="1">Multi-pass membrane protein</topology>
    </subcellularLocation>
</comment>
<comment type="similarity">
    <text evidence="1">Belongs to the binding-protein-dependent transport system permease family. FecCD subfamily.</text>
</comment>
<keyword id="KW-0997">Cell inner membrane</keyword>
<keyword id="KW-1003">Cell membrane</keyword>
<keyword id="KW-0472">Membrane</keyword>
<keyword id="KW-0812">Transmembrane</keyword>
<keyword id="KW-1133">Transmembrane helix</keyword>
<keyword id="KW-0813">Transport</keyword>
<feature type="chain" id="PRO_1000201548" description="Vitamin B12 import system permease protein BtuC">
    <location>
        <begin position="1"/>
        <end position="326"/>
    </location>
</feature>
<feature type="transmembrane region" description="Helical" evidence="1">
    <location>
        <begin position="15"/>
        <end position="35"/>
    </location>
</feature>
<feature type="transmembrane region" description="Helical" evidence="1">
    <location>
        <begin position="61"/>
        <end position="81"/>
    </location>
</feature>
<feature type="transmembrane region" description="Helical" evidence="1">
    <location>
        <begin position="88"/>
        <end position="108"/>
    </location>
</feature>
<feature type="transmembrane region" description="Helical" evidence="1">
    <location>
        <begin position="112"/>
        <end position="132"/>
    </location>
</feature>
<feature type="transmembrane region" description="Helical" evidence="1">
    <location>
        <begin position="146"/>
        <end position="166"/>
    </location>
</feature>
<feature type="transmembrane region" description="Helical" evidence="1">
    <location>
        <begin position="184"/>
        <end position="204"/>
    </location>
</feature>
<feature type="transmembrane region" description="Helical" evidence="1">
    <location>
        <begin position="240"/>
        <end position="260"/>
    </location>
</feature>
<feature type="transmembrane region" description="Helical" evidence="1">
    <location>
        <begin position="274"/>
        <end position="294"/>
    </location>
</feature>
<feature type="transmembrane region" description="Helical" evidence="1">
    <location>
        <begin position="302"/>
        <end position="322"/>
    </location>
</feature>
<protein>
    <recommendedName>
        <fullName evidence="1">Vitamin B12 import system permease protein BtuC</fullName>
    </recommendedName>
</protein>
<name>BTUC_ECO7I</name>
<evidence type="ECO:0000255" key="1">
    <source>
        <dbReference type="HAMAP-Rule" id="MF_01004"/>
    </source>
</evidence>